<comment type="function">
    <text evidence="1">Catalyzes a trans-dehydration via an enolate intermediate.</text>
</comment>
<comment type="catalytic activity">
    <reaction evidence="1">
        <text>3-dehydroquinate = 3-dehydroshikimate + H2O</text>
        <dbReference type="Rhea" id="RHEA:21096"/>
        <dbReference type="ChEBI" id="CHEBI:15377"/>
        <dbReference type="ChEBI" id="CHEBI:16630"/>
        <dbReference type="ChEBI" id="CHEBI:32364"/>
        <dbReference type="EC" id="4.2.1.10"/>
    </reaction>
</comment>
<comment type="pathway">
    <text evidence="1">Metabolic intermediate biosynthesis; chorismate biosynthesis; chorismate from D-erythrose 4-phosphate and phosphoenolpyruvate: step 3/7.</text>
</comment>
<comment type="subunit">
    <text evidence="1">Homododecamer.</text>
</comment>
<comment type="similarity">
    <text evidence="1">Belongs to the type-II 3-dehydroquinase family.</text>
</comment>
<feature type="chain" id="PRO_1000023454" description="3-dehydroquinate dehydratase">
    <location>
        <begin position="1"/>
        <end position="163"/>
    </location>
</feature>
<feature type="active site" description="Proton acceptor" evidence="1">
    <location>
        <position position="28"/>
    </location>
</feature>
<feature type="active site" description="Proton donor" evidence="1">
    <location>
        <position position="106"/>
    </location>
</feature>
<feature type="binding site" evidence="1">
    <location>
        <position position="80"/>
    </location>
    <ligand>
        <name>substrate</name>
    </ligand>
</feature>
<feature type="binding site" evidence="1">
    <location>
        <position position="86"/>
    </location>
    <ligand>
        <name>substrate</name>
    </ligand>
</feature>
<feature type="binding site" evidence="1">
    <location>
        <position position="93"/>
    </location>
    <ligand>
        <name>substrate</name>
    </ligand>
</feature>
<feature type="binding site" evidence="1">
    <location>
        <begin position="107"/>
        <end position="108"/>
    </location>
    <ligand>
        <name>substrate</name>
    </ligand>
</feature>
<feature type="binding site" evidence="1">
    <location>
        <position position="117"/>
    </location>
    <ligand>
        <name>substrate</name>
    </ligand>
</feature>
<feature type="site" description="Transition state stabilizer" evidence="1">
    <location>
        <position position="23"/>
    </location>
</feature>
<evidence type="ECO:0000255" key="1">
    <source>
        <dbReference type="HAMAP-Rule" id="MF_00169"/>
    </source>
</evidence>
<gene>
    <name evidence="1" type="primary">aroQ</name>
    <name type="ordered locus">BBta_4214</name>
</gene>
<protein>
    <recommendedName>
        <fullName evidence="1">3-dehydroquinate dehydratase</fullName>
        <shortName evidence="1">3-dehydroquinase</shortName>
        <ecNumber evidence="1">4.2.1.10</ecNumber>
    </recommendedName>
    <alternativeName>
        <fullName evidence="1">Type II DHQase</fullName>
    </alternativeName>
</protein>
<accession>A5EJC6</accession>
<organism>
    <name type="scientific">Bradyrhizobium sp. (strain BTAi1 / ATCC BAA-1182)</name>
    <dbReference type="NCBI Taxonomy" id="288000"/>
    <lineage>
        <taxon>Bacteria</taxon>
        <taxon>Pseudomonadati</taxon>
        <taxon>Pseudomonadota</taxon>
        <taxon>Alphaproteobacteria</taxon>
        <taxon>Hyphomicrobiales</taxon>
        <taxon>Nitrobacteraceae</taxon>
        <taxon>Bradyrhizobium</taxon>
    </lineage>
</organism>
<reference key="1">
    <citation type="journal article" date="2007" name="Science">
        <title>Legumes symbioses: absence of nod genes in photosynthetic bradyrhizobia.</title>
        <authorList>
            <person name="Giraud E."/>
            <person name="Moulin L."/>
            <person name="Vallenet D."/>
            <person name="Barbe V."/>
            <person name="Cytryn E."/>
            <person name="Avarre J.-C."/>
            <person name="Jaubert M."/>
            <person name="Simon D."/>
            <person name="Cartieaux F."/>
            <person name="Prin Y."/>
            <person name="Bena G."/>
            <person name="Hannibal L."/>
            <person name="Fardoux J."/>
            <person name="Kojadinovic M."/>
            <person name="Vuillet L."/>
            <person name="Lajus A."/>
            <person name="Cruveiller S."/>
            <person name="Rouy Z."/>
            <person name="Mangenot S."/>
            <person name="Segurens B."/>
            <person name="Dossat C."/>
            <person name="Franck W.L."/>
            <person name="Chang W.-S."/>
            <person name="Saunders E."/>
            <person name="Bruce D."/>
            <person name="Richardson P."/>
            <person name="Normand P."/>
            <person name="Dreyfus B."/>
            <person name="Pignol D."/>
            <person name="Stacey G."/>
            <person name="Emerich D."/>
            <person name="Vermeglio A."/>
            <person name="Medigue C."/>
            <person name="Sadowsky M."/>
        </authorList>
    </citation>
    <scope>NUCLEOTIDE SEQUENCE [LARGE SCALE GENOMIC DNA]</scope>
    <source>
        <strain>BTAi1 / ATCC BAA-1182</strain>
    </source>
</reference>
<keyword id="KW-0028">Amino-acid biosynthesis</keyword>
<keyword id="KW-0057">Aromatic amino acid biosynthesis</keyword>
<keyword id="KW-0456">Lyase</keyword>
<keyword id="KW-1185">Reference proteome</keyword>
<dbReference type="EC" id="4.2.1.10" evidence="1"/>
<dbReference type="EMBL" id="CP000494">
    <property type="protein sequence ID" value="ABQ36270.1"/>
    <property type="molecule type" value="Genomic_DNA"/>
</dbReference>
<dbReference type="RefSeq" id="WP_012044269.1">
    <property type="nucleotide sequence ID" value="NC_009485.1"/>
</dbReference>
<dbReference type="SMR" id="A5EJC6"/>
<dbReference type="STRING" id="288000.BBta_4214"/>
<dbReference type="KEGG" id="bbt:BBta_4214"/>
<dbReference type="eggNOG" id="COG0757">
    <property type="taxonomic scope" value="Bacteria"/>
</dbReference>
<dbReference type="HOGENOM" id="CLU_090968_2_0_5"/>
<dbReference type="OrthoDB" id="9790793at2"/>
<dbReference type="UniPathway" id="UPA00053">
    <property type="reaction ID" value="UER00086"/>
</dbReference>
<dbReference type="Proteomes" id="UP000000246">
    <property type="component" value="Chromosome"/>
</dbReference>
<dbReference type="GO" id="GO:0003855">
    <property type="term" value="F:3-dehydroquinate dehydratase activity"/>
    <property type="evidence" value="ECO:0007669"/>
    <property type="project" value="UniProtKB-UniRule"/>
</dbReference>
<dbReference type="GO" id="GO:0008652">
    <property type="term" value="P:amino acid biosynthetic process"/>
    <property type="evidence" value="ECO:0007669"/>
    <property type="project" value="UniProtKB-KW"/>
</dbReference>
<dbReference type="GO" id="GO:0009073">
    <property type="term" value="P:aromatic amino acid family biosynthetic process"/>
    <property type="evidence" value="ECO:0007669"/>
    <property type="project" value="UniProtKB-KW"/>
</dbReference>
<dbReference type="GO" id="GO:0009423">
    <property type="term" value="P:chorismate biosynthetic process"/>
    <property type="evidence" value="ECO:0007669"/>
    <property type="project" value="UniProtKB-UniRule"/>
</dbReference>
<dbReference type="GO" id="GO:0019631">
    <property type="term" value="P:quinate catabolic process"/>
    <property type="evidence" value="ECO:0007669"/>
    <property type="project" value="TreeGrafter"/>
</dbReference>
<dbReference type="CDD" id="cd00466">
    <property type="entry name" value="DHQase_II"/>
    <property type="match status" value="1"/>
</dbReference>
<dbReference type="Gene3D" id="3.40.50.9100">
    <property type="entry name" value="Dehydroquinase, class II"/>
    <property type="match status" value="1"/>
</dbReference>
<dbReference type="HAMAP" id="MF_00169">
    <property type="entry name" value="AroQ"/>
    <property type="match status" value="1"/>
</dbReference>
<dbReference type="InterPro" id="IPR001874">
    <property type="entry name" value="DHquinase_II"/>
</dbReference>
<dbReference type="InterPro" id="IPR018509">
    <property type="entry name" value="DHquinase_II_CS"/>
</dbReference>
<dbReference type="InterPro" id="IPR036441">
    <property type="entry name" value="DHquinase_II_sf"/>
</dbReference>
<dbReference type="NCBIfam" id="TIGR01088">
    <property type="entry name" value="aroQ"/>
    <property type="match status" value="1"/>
</dbReference>
<dbReference type="NCBIfam" id="NF003805">
    <property type="entry name" value="PRK05395.1-2"/>
    <property type="match status" value="1"/>
</dbReference>
<dbReference type="NCBIfam" id="NF003806">
    <property type="entry name" value="PRK05395.1-3"/>
    <property type="match status" value="1"/>
</dbReference>
<dbReference type="NCBIfam" id="NF003807">
    <property type="entry name" value="PRK05395.1-4"/>
    <property type="match status" value="1"/>
</dbReference>
<dbReference type="PANTHER" id="PTHR21272">
    <property type="entry name" value="CATABOLIC 3-DEHYDROQUINASE"/>
    <property type="match status" value="1"/>
</dbReference>
<dbReference type="PANTHER" id="PTHR21272:SF3">
    <property type="entry name" value="CATABOLIC 3-DEHYDROQUINASE"/>
    <property type="match status" value="1"/>
</dbReference>
<dbReference type="Pfam" id="PF01220">
    <property type="entry name" value="DHquinase_II"/>
    <property type="match status" value="1"/>
</dbReference>
<dbReference type="PIRSF" id="PIRSF001399">
    <property type="entry name" value="DHquinase_II"/>
    <property type="match status" value="1"/>
</dbReference>
<dbReference type="SUPFAM" id="SSF52304">
    <property type="entry name" value="Type II 3-dehydroquinate dehydratase"/>
    <property type="match status" value="1"/>
</dbReference>
<dbReference type="PROSITE" id="PS01029">
    <property type="entry name" value="DEHYDROQUINASE_II"/>
    <property type="match status" value="1"/>
</dbReference>
<proteinExistence type="inferred from homology"/>
<name>AROQ_BRASB</name>
<sequence length="163" mass="17391">MADDPHKTIYVLNGPNLNLLGTREPETYGHATLADVERLCVETATRFGLVAECRQSNHEGVLVDCVHEARVKGVAGIILNAGAYSHTSIALHDALMGVKIPTVEVHISNIHARESFRHHSFTAKAAFASICGFGIDGYRLAITGLAAKIGATTDTKTDITAQA</sequence>